<reference key="1">
    <citation type="journal article" date="2004" name="Science">
        <title>The genomic sequence of the accidental pathogen Legionella pneumophila.</title>
        <authorList>
            <person name="Chien M."/>
            <person name="Morozova I."/>
            <person name="Shi S."/>
            <person name="Sheng H."/>
            <person name="Chen J."/>
            <person name="Gomez S.M."/>
            <person name="Asamani G."/>
            <person name="Hill K."/>
            <person name="Nuara J."/>
            <person name="Feder M."/>
            <person name="Rineer J."/>
            <person name="Greenberg J.J."/>
            <person name="Steshenko V."/>
            <person name="Park S.H."/>
            <person name="Zhao B."/>
            <person name="Teplitskaya E."/>
            <person name="Edwards J.R."/>
            <person name="Pampou S."/>
            <person name="Georghiou A."/>
            <person name="Chou I.-C."/>
            <person name="Iannuccilli W."/>
            <person name="Ulz M.E."/>
            <person name="Kim D.H."/>
            <person name="Geringer-Sameth A."/>
            <person name="Goldsberry C."/>
            <person name="Morozov P."/>
            <person name="Fischer S.G."/>
            <person name="Segal G."/>
            <person name="Qu X."/>
            <person name="Rzhetsky A."/>
            <person name="Zhang P."/>
            <person name="Cayanis E."/>
            <person name="De Jong P.J."/>
            <person name="Ju J."/>
            <person name="Kalachikov S."/>
            <person name="Shuman H.A."/>
            <person name="Russo J.J."/>
        </authorList>
    </citation>
    <scope>NUCLEOTIDE SEQUENCE [LARGE SCALE GENOMIC DNA]</scope>
    <source>
        <strain>Philadelphia 1 / ATCC 33152 / DSM 7513</strain>
    </source>
</reference>
<evidence type="ECO:0000255" key="1">
    <source>
        <dbReference type="HAMAP-Rule" id="MF_01102"/>
    </source>
</evidence>
<feature type="chain" id="PRO_0000347993" description="tRNA 5-methylaminomethyl-2-thiouridine biosynthesis bifunctional protein MnmC">
    <location>
        <begin position="1"/>
        <end position="666"/>
    </location>
</feature>
<feature type="region of interest" description="tRNA (mnm(5)s(2)U34)-methyltransferase">
    <location>
        <begin position="1"/>
        <end position="253"/>
    </location>
</feature>
<feature type="region of interest" description="FAD-dependent cmnm(5)s(2)U34 oxidoreductase">
    <location>
        <begin position="283"/>
        <end position="666"/>
    </location>
</feature>
<comment type="function">
    <text evidence="1">Catalyzes the last two steps in the biosynthesis of 5-methylaminomethyl-2-thiouridine (mnm(5)s(2)U) at the wobble position (U34) in tRNA. Catalyzes the FAD-dependent demodification of cmnm(5)s(2)U34 to nm(5)s(2)U34, followed by the transfer of a methyl group from S-adenosyl-L-methionine to nm(5)s(2)U34, to form mnm(5)s(2)U34.</text>
</comment>
<comment type="catalytic activity">
    <reaction evidence="1">
        <text>5-aminomethyl-2-thiouridine(34) in tRNA + S-adenosyl-L-methionine = 5-methylaminomethyl-2-thiouridine(34) in tRNA + S-adenosyl-L-homocysteine + H(+)</text>
        <dbReference type="Rhea" id="RHEA:19569"/>
        <dbReference type="Rhea" id="RHEA-COMP:10195"/>
        <dbReference type="Rhea" id="RHEA-COMP:10197"/>
        <dbReference type="ChEBI" id="CHEBI:15378"/>
        <dbReference type="ChEBI" id="CHEBI:57856"/>
        <dbReference type="ChEBI" id="CHEBI:59789"/>
        <dbReference type="ChEBI" id="CHEBI:74454"/>
        <dbReference type="ChEBI" id="CHEBI:74455"/>
        <dbReference type="EC" id="2.1.1.61"/>
    </reaction>
</comment>
<comment type="cofactor">
    <cofactor evidence="1">
        <name>FAD</name>
        <dbReference type="ChEBI" id="CHEBI:57692"/>
    </cofactor>
</comment>
<comment type="subcellular location">
    <subcellularLocation>
        <location evidence="1">Cytoplasm</location>
    </subcellularLocation>
</comment>
<comment type="similarity">
    <text evidence="1">In the N-terminal section; belongs to the methyltransferase superfamily. tRNA (mnm(5)s(2)U34)-methyltransferase family.</text>
</comment>
<comment type="similarity">
    <text evidence="1">In the C-terminal section; belongs to the DAO family.</text>
</comment>
<organism>
    <name type="scientific">Legionella pneumophila subsp. pneumophila (strain Philadelphia 1 / ATCC 33152 / DSM 7513)</name>
    <dbReference type="NCBI Taxonomy" id="272624"/>
    <lineage>
        <taxon>Bacteria</taxon>
        <taxon>Pseudomonadati</taxon>
        <taxon>Pseudomonadota</taxon>
        <taxon>Gammaproteobacteria</taxon>
        <taxon>Legionellales</taxon>
        <taxon>Legionellaceae</taxon>
        <taxon>Legionella</taxon>
    </lineage>
</organism>
<accession>Q5ZVA8</accession>
<dbReference type="EC" id="2.1.1.61" evidence="1"/>
<dbReference type="EC" id="1.5.-.-" evidence="1"/>
<dbReference type="EMBL" id="AE017354">
    <property type="protein sequence ID" value="AAU27614.1"/>
    <property type="molecule type" value="Genomic_DNA"/>
</dbReference>
<dbReference type="RefSeq" id="WP_010947261.1">
    <property type="nucleotide sequence ID" value="NC_002942.5"/>
</dbReference>
<dbReference type="RefSeq" id="YP_095561.1">
    <property type="nucleotide sequence ID" value="NC_002942.5"/>
</dbReference>
<dbReference type="SMR" id="Q5ZVA8"/>
<dbReference type="STRING" id="272624.lpg1532"/>
<dbReference type="PaxDb" id="272624-lpg1532"/>
<dbReference type="GeneID" id="57035521"/>
<dbReference type="KEGG" id="lpn:lpg1532"/>
<dbReference type="PATRIC" id="fig|272624.6.peg.1605"/>
<dbReference type="eggNOG" id="COG0665">
    <property type="taxonomic scope" value="Bacteria"/>
</dbReference>
<dbReference type="eggNOG" id="COG4121">
    <property type="taxonomic scope" value="Bacteria"/>
</dbReference>
<dbReference type="HOGENOM" id="CLU_022427_1_0_6"/>
<dbReference type="OrthoDB" id="9786494at2"/>
<dbReference type="Proteomes" id="UP000000609">
    <property type="component" value="Chromosome"/>
</dbReference>
<dbReference type="GO" id="GO:0005737">
    <property type="term" value="C:cytoplasm"/>
    <property type="evidence" value="ECO:0007669"/>
    <property type="project" value="UniProtKB-SubCell"/>
</dbReference>
<dbReference type="GO" id="GO:0050660">
    <property type="term" value="F:flavin adenine dinucleotide binding"/>
    <property type="evidence" value="ECO:0007669"/>
    <property type="project" value="UniProtKB-UniRule"/>
</dbReference>
<dbReference type="GO" id="GO:0016645">
    <property type="term" value="F:oxidoreductase activity, acting on the CH-NH group of donors"/>
    <property type="evidence" value="ECO:0007669"/>
    <property type="project" value="InterPro"/>
</dbReference>
<dbReference type="GO" id="GO:0004808">
    <property type="term" value="F:tRNA (5-methylaminomethyl-2-thiouridylate)(34)-methyltransferase activity"/>
    <property type="evidence" value="ECO:0007669"/>
    <property type="project" value="UniProtKB-EC"/>
</dbReference>
<dbReference type="GO" id="GO:0032259">
    <property type="term" value="P:methylation"/>
    <property type="evidence" value="ECO:0007669"/>
    <property type="project" value="UniProtKB-KW"/>
</dbReference>
<dbReference type="GO" id="GO:0002097">
    <property type="term" value="P:tRNA wobble base modification"/>
    <property type="evidence" value="ECO:0007669"/>
    <property type="project" value="UniProtKB-UniRule"/>
</dbReference>
<dbReference type="Gene3D" id="3.30.9.10">
    <property type="entry name" value="D-Amino Acid Oxidase, subunit A, domain 2"/>
    <property type="match status" value="1"/>
</dbReference>
<dbReference type="Gene3D" id="3.50.50.60">
    <property type="entry name" value="FAD/NAD(P)-binding domain"/>
    <property type="match status" value="1"/>
</dbReference>
<dbReference type="Gene3D" id="3.40.50.150">
    <property type="entry name" value="Vaccinia Virus protein VP39"/>
    <property type="match status" value="1"/>
</dbReference>
<dbReference type="HAMAP" id="MF_01102">
    <property type="entry name" value="MnmC"/>
    <property type="match status" value="1"/>
</dbReference>
<dbReference type="InterPro" id="IPR006076">
    <property type="entry name" value="FAD-dep_OxRdtase"/>
</dbReference>
<dbReference type="InterPro" id="IPR036188">
    <property type="entry name" value="FAD/NAD-bd_sf"/>
</dbReference>
<dbReference type="InterPro" id="IPR008471">
    <property type="entry name" value="MnmC-like_methylTransf"/>
</dbReference>
<dbReference type="InterPro" id="IPR029063">
    <property type="entry name" value="SAM-dependent_MTases_sf"/>
</dbReference>
<dbReference type="InterPro" id="IPR023032">
    <property type="entry name" value="tRNA_MAMT_biosynth_bifunc_MnmC"/>
</dbReference>
<dbReference type="InterPro" id="IPR047785">
    <property type="entry name" value="tRNA_MNMC2"/>
</dbReference>
<dbReference type="InterPro" id="IPR017610">
    <property type="entry name" value="tRNA_S-uridine_synth_MnmC_C"/>
</dbReference>
<dbReference type="NCBIfam" id="TIGR03197">
    <property type="entry name" value="MnmC_Cterm"/>
    <property type="match status" value="1"/>
</dbReference>
<dbReference type="NCBIfam" id="NF002481">
    <property type="entry name" value="PRK01747.1-2"/>
    <property type="match status" value="1"/>
</dbReference>
<dbReference type="NCBIfam" id="NF033855">
    <property type="entry name" value="tRNA_MNMC2"/>
    <property type="match status" value="1"/>
</dbReference>
<dbReference type="PANTHER" id="PTHR13847">
    <property type="entry name" value="SARCOSINE DEHYDROGENASE-RELATED"/>
    <property type="match status" value="1"/>
</dbReference>
<dbReference type="PANTHER" id="PTHR13847:SF283">
    <property type="entry name" value="TRNA 5-METHYLAMINOMETHYL-2-THIOURIDINE BIOSYNTHESIS BIFUNCTIONAL PROTEIN MNMC"/>
    <property type="match status" value="1"/>
</dbReference>
<dbReference type="Pfam" id="PF01266">
    <property type="entry name" value="DAO"/>
    <property type="match status" value="1"/>
</dbReference>
<dbReference type="Pfam" id="PF05430">
    <property type="entry name" value="Methyltransf_30"/>
    <property type="match status" value="1"/>
</dbReference>
<dbReference type="SUPFAM" id="SSF54373">
    <property type="entry name" value="FAD-linked reductases, C-terminal domain"/>
    <property type="match status" value="1"/>
</dbReference>
<dbReference type="SUPFAM" id="SSF51905">
    <property type="entry name" value="FAD/NAD(P)-binding domain"/>
    <property type="match status" value="1"/>
</dbReference>
<sequence>MSSPFVPIITADIDWRDDLPYSLQFDDIYYSAEGGINQSLYVFVEGNNLINRWQQLPTNESNVFTIAETGFGTGMNFLLTWKLWEKFAPQNARLHYISCDKHPLKKNDLIKCLQKWPELSVQAEKLIAHYPVLTPGYHHLTFSNNQITLTLMLGDVLECYEQLLFCGDINLEHQLRESYVNAWYLDGFSPSKNQSMWSDNLFTVIAMLSKESTTVATYSASSIVKTALTNAGFVIEKRKGFGPKRHMICAHYEKAYSSSKKNRHTPWHINYPVTKDERTALIVGGGLAGCFIANSLAKRGWEVTILEEKEKVGCGGSANQQAVLFPKLSTYKSPFTQFMLYSFLYANDVYKELLKYYDLGELKGSLLLAHNEKEKANQQSLIHWLELYPELGQLVDEKQSSELSGISLPCGGLFIPSSGWINSPELCDILIDNKRISLITGNRVQSINYNQKNWVVNGIEASVLILANGQQVNYFHETNHLPVKAIRGQMTTIQSTQESTKLKIPLCAEGHVLPALNNSHKVGASYDIGTSEPELNALDDQLNLARLKRIAPDIMWSQNVLDHWAGIRAASPDYLPIVGPLPNALEFKEIYSELKSNSKRWIAEAAPCYPNLYVCAAFGSRGLTTIPLATEWLAGLINKEISILPRKLIQAISPARFLRKKIIQGP</sequence>
<proteinExistence type="inferred from homology"/>
<keyword id="KW-0963">Cytoplasm</keyword>
<keyword id="KW-0274">FAD</keyword>
<keyword id="KW-0285">Flavoprotein</keyword>
<keyword id="KW-0489">Methyltransferase</keyword>
<keyword id="KW-0511">Multifunctional enzyme</keyword>
<keyword id="KW-0560">Oxidoreductase</keyword>
<keyword id="KW-1185">Reference proteome</keyword>
<keyword id="KW-0949">S-adenosyl-L-methionine</keyword>
<keyword id="KW-0808">Transferase</keyword>
<keyword id="KW-0819">tRNA processing</keyword>
<gene>
    <name evidence="1" type="primary">mnmC</name>
    <name type="ordered locus">lpg1532</name>
</gene>
<protein>
    <recommendedName>
        <fullName evidence="1">tRNA 5-methylaminomethyl-2-thiouridine biosynthesis bifunctional protein MnmC</fullName>
        <shortName evidence="1">tRNA mnm(5)s(2)U biosynthesis bifunctional protein</shortName>
    </recommendedName>
    <domain>
        <recommendedName>
            <fullName evidence="1">tRNA (mnm(5)s(2)U34)-methyltransferase</fullName>
            <ecNumber evidence="1">2.1.1.61</ecNumber>
        </recommendedName>
    </domain>
    <domain>
        <recommendedName>
            <fullName evidence="1">FAD-dependent cmnm(5)s(2)U34 oxidoreductase</fullName>
            <ecNumber evidence="1">1.5.-.-</ecNumber>
        </recommendedName>
    </domain>
</protein>
<name>MNMC_LEGPH</name>